<comment type="function">
    <text evidence="3 5 6">Involved in the degradation of host DNA and the shutoff of host genes and phage pre-early genes. Together with A2 protein, involved in the second step transfer (SST) of viral DNA into the host cell, which leads to the complete entry of viral DNA into the host cell.</text>
</comment>
<comment type="subunit">
    <text evidence="4 5">Homooligomer (PubMed:5136582). Interacts with A2 protein; the two proteins form heterooligomers (PubMed:5136582). Part of a complex containing the host RNA polymerase, protein A1 as well as another viral protein of 11 kDa; these interactions are probably involved in the transcription shutoff of pre-early genes (PubMed:7033565).</text>
</comment>
<comment type="induction">
    <text evidence="2">Expressed pre-early in the viral replicative cycle. Expressed with a few other proteins from the first step transfer (FST) DNA. FST DNA corresponds to the first small portion of the genome that enters into the host cell at the beginning of infection before pausing.</text>
</comment>
<comment type="miscellaneous">
    <text evidence="1">This gene is part of the long terminal repeats present at both ends of the viral genome and is thus duplicated.</text>
</comment>
<dbReference type="EMBL" id="AY587007">
    <property type="protein sequence ID" value="AAX11941.1"/>
    <property type="status" value="ALT_SEQ"/>
    <property type="molecule type" value="Genomic_DNA"/>
</dbReference>
<dbReference type="EMBL" id="AY587007">
    <property type="protein sequence ID" value="AAX12092.1"/>
    <property type="status" value="ALT_SEQ"/>
    <property type="molecule type" value="Genomic_DNA"/>
</dbReference>
<dbReference type="EMBL" id="AY543070">
    <property type="protein sequence ID" value="AAS77051.1"/>
    <property type="molecule type" value="Genomic_DNA"/>
</dbReference>
<dbReference type="EMBL" id="AY692264">
    <property type="protein sequence ID" value="AAU05301.1"/>
    <property type="molecule type" value="Genomic_DNA"/>
</dbReference>
<dbReference type="EMBL" id="AY692264">
    <property type="protein sequence ID" value="AAU05157.1"/>
    <property type="molecule type" value="Genomic_DNA"/>
</dbReference>
<dbReference type="RefSeq" id="YP_006832.1">
    <property type="nucleotide sequence ID" value="NC_005859.1"/>
</dbReference>
<dbReference type="GeneID" id="2777670"/>
<dbReference type="KEGG" id="vg:2777670"/>
<dbReference type="Proteomes" id="UP000002107">
    <property type="component" value="Genome"/>
</dbReference>
<dbReference type="Proteomes" id="UP000002141">
    <property type="component" value="Segment"/>
</dbReference>
<dbReference type="Proteomes" id="UP000002503">
    <property type="component" value="Segment"/>
</dbReference>
<dbReference type="GO" id="GO:0099015">
    <property type="term" value="P:degradation of host chromosome by virus"/>
    <property type="evidence" value="ECO:0007669"/>
    <property type="project" value="UniProtKB-KW"/>
</dbReference>
<dbReference type="GO" id="GO:0039657">
    <property type="term" value="P:symbiont-mediated suppression of host gene expression"/>
    <property type="evidence" value="ECO:0007669"/>
    <property type="project" value="UniProtKB-KW"/>
</dbReference>
<protein>
    <recommendedName>
        <fullName evidence="7">Protein A1</fullName>
    </recommendedName>
</protein>
<proteinExistence type="evidence at protein level"/>
<reference key="1">
    <citation type="journal article" date="2005" name="Virology">
        <title>Complete genome sequence of bacteriophage T5.</title>
        <authorList>
            <person name="Wang J."/>
            <person name="Jiang Y."/>
            <person name="Vincent M."/>
            <person name="Sun Y."/>
            <person name="Yu H."/>
            <person name="Wang J."/>
            <person name="Bao Q."/>
            <person name="Kong H."/>
            <person name="Hu S."/>
        </authorList>
    </citation>
    <scope>NUCLEOTIDE SEQUENCE [GENOMIC DNA]</scope>
    <scope>FUNCTION</scope>
    <source>
        <strain evidence="11">ATCC 11303-B5</strain>
    </source>
</reference>
<reference key="2">
    <citation type="submission" date="2004-01" db="EMBL/GenBank/DDBJ databases">
        <title>Bacteriophage T5 complete genome.</title>
        <authorList>
            <person name="Ksenzenko V.N."/>
            <person name="Kaliman A.V."/>
            <person name="Krutilina A.I."/>
            <person name="Shlyapnikov M.G."/>
        </authorList>
    </citation>
    <scope>NUCLEOTIDE SEQUENCE [LARGE SCALE GENOMIC DNA]</scope>
</reference>
<reference key="3">
    <citation type="journal article" date="2014" name="J. Virol.">
        <title>Insights into bacteriophage T5 structure from analysis of its morphogenesis genes and protein components.</title>
        <authorList>
            <person name="Zivanovic Y."/>
            <person name="Confalonieri F."/>
            <person name="Ponchon L."/>
            <person name="Lurz R."/>
            <person name="Chami M."/>
            <person name="Flayhan A."/>
            <person name="Renouard M."/>
            <person name="Huet A."/>
            <person name="Decottignies P."/>
            <person name="Davidson A.R."/>
            <person name="Breyton C."/>
            <person name="Boulanger P."/>
        </authorList>
    </citation>
    <scope>NUCLEOTIDE SEQUENCE [LARGE SCALE GENOMIC DNA]</scope>
    <source>
        <strain evidence="10">St0 deletion mutant</strain>
    </source>
</reference>
<reference key="4">
    <citation type="journal article" date="1970" name="J. Mol. Biol.">
        <title>Patterns of protein synthesis in Escherichia coli infected by amber mutants in the first-step-transfer DNA of T5.</title>
        <authorList>
            <person name="McCorquodale D.J."/>
            <person name="Lanni Y.T."/>
        </authorList>
    </citation>
    <scope>FUNCTION</scope>
</reference>
<reference key="5">
    <citation type="journal article" date="1971" name="J. Mol. Biol.">
        <title>Pre-early proteins of bacteriophage T5: structure and function.</title>
        <authorList>
            <person name="Beckman L.D."/>
            <person name="Hoffman M.S."/>
            <person name="McCorquodale D.J."/>
        </authorList>
    </citation>
    <scope>SUBUNIT</scope>
</reference>
<reference key="6">
    <citation type="journal article" date="1977" name="J. Virol.">
        <title>Pre-early polypeptides of bacteriophages T5 and BF23.</title>
        <authorList>
            <person name="McCorquodale D.J."/>
            <person name="Shaw A.R."/>
            <person name="Shaw P.K."/>
            <person name="Chinnadurai G."/>
        </authorList>
    </citation>
    <scope>INDUCTION</scope>
</reference>
<reference key="7">
    <citation type="journal article" date="1981" name="J. Virol.">
        <title>Modification of RNA polymerase from Escherichia coli by pre-early gene products of bacteriophage T5.</title>
        <authorList>
            <person name="McCorquodale D.J."/>
            <person name="Chen C.W."/>
            <person name="Joseph M.K."/>
            <person name="Woychik R."/>
        </authorList>
    </citation>
    <scope>FUNCTION</scope>
    <scope>IDENTIFICATION IN A COMPLEX WITH HOST RNA POLYMERASE</scope>
</reference>
<name>A1_BPT5</name>
<evidence type="ECO:0000269" key="1">
    <source>
    </source>
</evidence>
<evidence type="ECO:0000269" key="2">
    <source>
    </source>
</evidence>
<evidence type="ECO:0000269" key="3">
    <source>
    </source>
</evidence>
<evidence type="ECO:0000269" key="4">
    <source>
    </source>
</evidence>
<evidence type="ECO:0000269" key="5">
    <source>
    </source>
</evidence>
<evidence type="ECO:0000303" key="6">
    <source>
    </source>
</evidence>
<evidence type="ECO:0000305" key="7"/>
<evidence type="ECO:0000312" key="8">
    <source>
        <dbReference type="EMBL" id="AAS77051.1"/>
    </source>
</evidence>
<evidence type="ECO:0000312" key="9">
    <source>
        <dbReference type="EMBL" id="AAU05157.1"/>
    </source>
</evidence>
<evidence type="ECO:0000312" key="10">
    <source>
        <dbReference type="EMBL" id="AAU05301.1"/>
    </source>
</evidence>
<evidence type="ECO:0000312" key="11">
    <source>
        <dbReference type="EMBL" id="AAX12092.1"/>
    </source>
</evidence>
<keyword id="KW-1261">Bacterial host gene expression shutoff by virus</keyword>
<keyword id="KW-1247">Degradation of host chromosome by virus</keyword>
<keyword id="KW-0244">Early protein</keyword>
<keyword id="KW-1190">Host gene expression shutoff by virus</keyword>
<keyword id="KW-0945">Host-virus interaction</keyword>
<keyword id="KW-1185">Reference proteome</keyword>
<accession>Q6QGT3</accession>
<accession>Q5DMD9</accession>
<accession>Q66M45</accession>
<feature type="chain" id="PRO_0000433206" description="Protein A1">
    <location>
        <begin position="1"/>
        <end position="556"/>
    </location>
</feature>
<gene>
    <name evidence="8" type="primary">A1</name>
    <name evidence="8" type="ORF">T5.004</name>
    <name evidence="9" type="ORF">T5p004</name>
</gene>
<gene>
    <name evidence="10" type="primary">A1.2</name>
    <name evidence="10" type="ORF">T5p162</name>
</gene>
<sequence>MVISAEKQTVILKMAADFNFYGKRLRATKLEVCDDISKMVYDTTKHSTAICDWLEANKPAKPKAAKVAKAIKNDERPEAAGIVSSTVEQWEVKQGKRFIITSIQNNTFPHKNFLASLEQYAQFIGADLLVSKFIYNKNGFQNGEGADGIRYDSAFDKYICNKNVFLNNRRFAFMAEINVLPTADYPLSGFAETATALNLEGLAIGAAKITAESVPALKGEIVRRMYSTGTATLKNYIQQKAGQKAEALHNFGALIVEFDEDGEFFVRQLETMDESGVFYDLNTCATPAGCYETTGHVLGLQYGDIHAEKLDEECAAASWGHGDTYGLVDILKPKYQFVHDVHDFTSRNHHNRASGVFLAKQYAAGRDKVLDDLIDTGRVLESMERDFSQTIIVESNHDLALSRWLDDRNANIKDDPANAELYHRLNAAIYGAIAEKDDTFNVLDYALRKVAGCEFNAIFLTTDQSFKIAGIECGVHGHNGINGSRGNPKQFKKLGKLNTGHTHTASIYGGVYTAGVTGSLDMGYNVGASSWTQTHIITYANGQRTLIDFKNGKFFA</sequence>
<organism>
    <name type="scientific">Escherichia phage T5</name>
    <name type="common">Enterobacteria phage T5</name>
    <dbReference type="NCBI Taxonomy" id="2695836"/>
    <lineage>
        <taxon>Viruses</taxon>
        <taxon>Duplodnaviria</taxon>
        <taxon>Heunggongvirae</taxon>
        <taxon>Uroviricota</taxon>
        <taxon>Caudoviricetes</taxon>
        <taxon>Demerecviridae</taxon>
        <taxon>Markadamsvirinae</taxon>
        <taxon>Tequintavirus</taxon>
        <taxon>Tequintavirus T5</taxon>
    </lineage>
</organism>
<organismHost>
    <name type="scientific">Escherichia coli</name>
    <dbReference type="NCBI Taxonomy" id="562"/>
</organismHost>